<keyword id="KW-1015">Disulfide bond</keyword>
<keyword id="KW-0391">Immunity</keyword>
<keyword id="KW-0393">Immunoglobulin domain</keyword>
<keyword id="KW-0490">MHC I</keyword>
<keyword id="KW-0964">Secreted</keyword>
<keyword id="KW-0732">Signal</keyword>
<proteinExistence type="inferred from homology"/>
<organism>
    <name type="scientific">Callicebus personatus personatus</name>
    <name type="common">Masked titi</name>
    <dbReference type="NCBI Taxonomy" id="78275"/>
    <lineage>
        <taxon>Eukaryota</taxon>
        <taxon>Metazoa</taxon>
        <taxon>Chordata</taxon>
        <taxon>Craniata</taxon>
        <taxon>Vertebrata</taxon>
        <taxon>Euteleostomi</taxon>
        <taxon>Mammalia</taxon>
        <taxon>Eutheria</taxon>
        <taxon>Euarchontoglires</taxon>
        <taxon>Primates</taxon>
        <taxon>Haplorrhini</taxon>
        <taxon>Platyrrhini</taxon>
        <taxon>Pitheciidae</taxon>
        <taxon>Callicebinae</taxon>
        <taxon>Callicebus</taxon>
    </lineage>
</organism>
<gene>
    <name type="primary">B2M</name>
</gene>
<dbReference type="EMBL" id="AF032057">
    <property type="protein sequence ID" value="AAC52105.1"/>
    <property type="molecule type" value="Genomic_DNA"/>
</dbReference>
<dbReference type="EMBL" id="AF032056">
    <property type="protein sequence ID" value="AAC52105.1"/>
    <property type="status" value="JOINED"/>
    <property type="molecule type" value="Genomic_DNA"/>
</dbReference>
<dbReference type="SMR" id="O77526"/>
<dbReference type="GO" id="GO:0005576">
    <property type="term" value="C:extracellular region"/>
    <property type="evidence" value="ECO:0007669"/>
    <property type="project" value="UniProtKB-SubCell"/>
</dbReference>
<dbReference type="GO" id="GO:0042612">
    <property type="term" value="C:MHC class I protein complex"/>
    <property type="evidence" value="ECO:0007669"/>
    <property type="project" value="UniProtKB-KW"/>
</dbReference>
<dbReference type="GO" id="GO:0002474">
    <property type="term" value="P:antigen processing and presentation of peptide antigen via MHC class I"/>
    <property type="evidence" value="ECO:0007669"/>
    <property type="project" value="UniProtKB-KW"/>
</dbReference>
<dbReference type="GO" id="GO:0006955">
    <property type="term" value="P:immune response"/>
    <property type="evidence" value="ECO:0007669"/>
    <property type="project" value="InterPro"/>
</dbReference>
<dbReference type="CDD" id="cd05770">
    <property type="entry name" value="IgC1_beta2m"/>
    <property type="match status" value="1"/>
</dbReference>
<dbReference type="FunFam" id="2.60.40.10:FF:001005">
    <property type="entry name" value="Beta-2-microglobulin"/>
    <property type="match status" value="1"/>
</dbReference>
<dbReference type="Gene3D" id="2.60.40.10">
    <property type="entry name" value="Immunoglobulins"/>
    <property type="match status" value="1"/>
</dbReference>
<dbReference type="InterPro" id="IPR015707">
    <property type="entry name" value="B2Microglobulin"/>
</dbReference>
<dbReference type="InterPro" id="IPR007110">
    <property type="entry name" value="Ig-like_dom"/>
</dbReference>
<dbReference type="InterPro" id="IPR036179">
    <property type="entry name" value="Ig-like_dom_sf"/>
</dbReference>
<dbReference type="InterPro" id="IPR013783">
    <property type="entry name" value="Ig-like_fold"/>
</dbReference>
<dbReference type="InterPro" id="IPR003006">
    <property type="entry name" value="Ig/MHC_CS"/>
</dbReference>
<dbReference type="InterPro" id="IPR003597">
    <property type="entry name" value="Ig_C1-set"/>
</dbReference>
<dbReference type="InterPro" id="IPR050160">
    <property type="entry name" value="MHC/Immunoglobulin"/>
</dbReference>
<dbReference type="PANTHER" id="PTHR19944:SF62">
    <property type="entry name" value="BETA-2-MICROGLOBULIN"/>
    <property type="match status" value="1"/>
</dbReference>
<dbReference type="PANTHER" id="PTHR19944">
    <property type="entry name" value="MHC CLASS II-RELATED"/>
    <property type="match status" value="1"/>
</dbReference>
<dbReference type="Pfam" id="PF07654">
    <property type="entry name" value="C1-set"/>
    <property type="match status" value="1"/>
</dbReference>
<dbReference type="SMART" id="SM00407">
    <property type="entry name" value="IGc1"/>
    <property type="match status" value="1"/>
</dbReference>
<dbReference type="SUPFAM" id="SSF48726">
    <property type="entry name" value="Immunoglobulin"/>
    <property type="match status" value="1"/>
</dbReference>
<dbReference type="PROSITE" id="PS50835">
    <property type="entry name" value="IG_LIKE"/>
    <property type="match status" value="1"/>
</dbReference>
<dbReference type="PROSITE" id="PS00290">
    <property type="entry name" value="IG_MHC"/>
    <property type="match status" value="1"/>
</dbReference>
<feature type="signal peptide" evidence="1">
    <location>
        <begin position="1"/>
        <end position="20"/>
    </location>
</feature>
<feature type="chain" id="PRO_0000018769" description="Beta-2-microglobulin">
    <location>
        <begin position="21"/>
        <end position="119"/>
    </location>
</feature>
<feature type="domain" description="Ig-like C1-type">
    <location>
        <begin position="25"/>
        <end position="114"/>
    </location>
</feature>
<feature type="disulfide bond" evidence="2">
    <location>
        <begin position="45"/>
        <end position="100"/>
    </location>
</feature>
<accession>O77526</accession>
<evidence type="ECO:0000250" key="1"/>
<evidence type="ECO:0000255" key="2">
    <source>
        <dbReference type="PROSITE-ProRule" id="PRU00114"/>
    </source>
</evidence>
<evidence type="ECO:0000305" key="3"/>
<name>B2MG_CALPP</name>
<protein>
    <recommendedName>
        <fullName>Beta-2-microglobulin</fullName>
    </recommendedName>
</protein>
<sequence>MARFVAVALLVLLSLSGLETIQHAPKIQVYSRHPAENGKPNFLNCYVSGFHPSDIEVDLLKNGKKIEKVEHSDLSFSKDWSFYLLYYTEFTPNEKDEYACRVSHVTFSTPKTVKWDRNM</sequence>
<reference key="1">
    <citation type="journal article" date="1998" name="Immunogenetics">
        <title>Beta-2-microglobulin in neotropical primates (Platyrrhini).</title>
        <authorList>
            <person name="Canavez F.C."/>
            <person name="Ladasky J.J."/>
            <person name="Muniz J.A.P.C."/>
            <person name="Seuanez H.N."/>
            <person name="Parham P."/>
        </authorList>
    </citation>
    <scope>NUCLEOTIDE SEQUENCE [GENOMIC DNA]</scope>
    <source>
        <tissue>Blood</tissue>
    </source>
</reference>
<comment type="function">
    <text evidence="1">Component of the class I major histocompatibility complex (MHC). Involved in the presentation of peptide antigens to the immune system (By similarity).</text>
</comment>
<comment type="subunit">
    <text evidence="1">Heterodimer of an alpha chain and a beta chain. Beta-2-microglobulin is the beta-chain of major histocompatibility complex class I molecules (By similarity).</text>
</comment>
<comment type="subcellular location">
    <subcellularLocation>
        <location evidence="1">Secreted</location>
    </subcellularLocation>
</comment>
<comment type="similarity">
    <text evidence="3">Belongs to the beta-2-microglobulin family.</text>
</comment>